<organism>
    <name type="scientific">Pyrococcus abyssi (strain GE5 / Orsay)</name>
    <dbReference type="NCBI Taxonomy" id="272844"/>
    <lineage>
        <taxon>Archaea</taxon>
        <taxon>Methanobacteriati</taxon>
        <taxon>Methanobacteriota</taxon>
        <taxon>Thermococci</taxon>
        <taxon>Thermococcales</taxon>
        <taxon>Thermococcaceae</taxon>
        <taxon>Pyrococcus</taxon>
    </lineage>
</organism>
<protein>
    <recommendedName>
        <fullName>Translation initiation factor 2 subunit beta</fullName>
    </recommendedName>
    <alternativeName>
        <fullName>aIF2-beta</fullName>
    </alternativeName>
    <alternativeName>
        <fullName>eIF-2-beta</fullName>
    </alternativeName>
</protein>
<name>IF2B_PYRAB</name>
<reference key="1">
    <citation type="journal article" date="2003" name="Mol. Microbiol.">
        <title>An integrated analysis of the genome of the hyperthermophilic archaeon Pyrococcus abyssi.</title>
        <authorList>
            <person name="Cohen G.N."/>
            <person name="Barbe V."/>
            <person name="Flament D."/>
            <person name="Galperin M."/>
            <person name="Heilig R."/>
            <person name="Lecompte O."/>
            <person name="Poch O."/>
            <person name="Prieur D."/>
            <person name="Querellou J."/>
            <person name="Ripp R."/>
            <person name="Thierry J.-C."/>
            <person name="Van der Oost J."/>
            <person name="Weissenbach J."/>
            <person name="Zivanovic Y."/>
            <person name="Forterre P."/>
        </authorList>
    </citation>
    <scope>NUCLEOTIDE SEQUENCE [LARGE SCALE GENOMIC DNA]</scope>
    <source>
        <strain>GE5 / Orsay</strain>
    </source>
</reference>
<reference key="2">
    <citation type="journal article" date="2012" name="Curr. Microbiol.">
        <title>Re-annotation of two hyperthermophilic archaea Pyrococcus abyssi GE5 and Pyrococcus furiosus DSM 3638.</title>
        <authorList>
            <person name="Gao J."/>
            <person name="Wang J."/>
        </authorList>
    </citation>
    <scope>GENOME REANNOTATION</scope>
    <source>
        <strain>GE5 / Orsay</strain>
    </source>
</reference>
<proteinExistence type="inferred from homology"/>
<feature type="chain" id="PRO_0000137428" description="Translation initiation factor 2 subunit beta">
    <location>
        <begin position="1"/>
        <end position="140"/>
    </location>
</feature>
<evidence type="ECO:0000250" key="1"/>
<evidence type="ECO:0000305" key="2"/>
<keyword id="KW-0396">Initiation factor</keyword>
<keyword id="KW-0648">Protein biosynthesis</keyword>
<gene>
    <name type="primary">eif2b</name>
    <name type="ordered locus">PYRAB14410</name>
    <name type="ORF">PAB0959</name>
</gene>
<accession>Q9UYR6</accession>
<accession>G8ZIK4</accession>
<dbReference type="EMBL" id="AJ248287">
    <property type="protein sequence ID" value="CAB50346.1"/>
    <property type="molecule type" value="Genomic_DNA"/>
</dbReference>
<dbReference type="EMBL" id="HE613800">
    <property type="protein sequence ID" value="CCE70887.1"/>
    <property type="molecule type" value="Genomic_DNA"/>
</dbReference>
<dbReference type="PIR" id="E75056">
    <property type="entry name" value="E75056"/>
</dbReference>
<dbReference type="RefSeq" id="WP_010868556.1">
    <property type="nucleotide sequence ID" value="NC_000868.1"/>
</dbReference>
<dbReference type="SMR" id="Q9UYR6"/>
<dbReference type="STRING" id="272844.PAB0959"/>
<dbReference type="KEGG" id="pab:PAB0959"/>
<dbReference type="PATRIC" id="fig|272844.11.peg.1532"/>
<dbReference type="eggNOG" id="arCOG01640">
    <property type="taxonomic scope" value="Archaea"/>
</dbReference>
<dbReference type="HOGENOM" id="CLU_026663_3_1_2"/>
<dbReference type="OrthoDB" id="38099at2157"/>
<dbReference type="PhylomeDB" id="Q9UYR6"/>
<dbReference type="Proteomes" id="UP000000810">
    <property type="component" value="Chromosome"/>
</dbReference>
<dbReference type="Proteomes" id="UP000009139">
    <property type="component" value="Chromosome"/>
</dbReference>
<dbReference type="GO" id="GO:0003743">
    <property type="term" value="F:translation initiation factor activity"/>
    <property type="evidence" value="ECO:0007669"/>
    <property type="project" value="UniProtKB-UniRule"/>
</dbReference>
<dbReference type="FunFam" id="3.30.30.170:FF:000001">
    <property type="entry name" value="Eukaryotic translation initiation factor 2 subunit"/>
    <property type="match status" value="1"/>
</dbReference>
<dbReference type="Gene3D" id="3.30.30.170">
    <property type="match status" value="1"/>
</dbReference>
<dbReference type="HAMAP" id="MF_00232">
    <property type="entry name" value="eIF_2_beta"/>
    <property type="match status" value="1"/>
</dbReference>
<dbReference type="InterPro" id="IPR045196">
    <property type="entry name" value="IF2/IF5"/>
</dbReference>
<dbReference type="InterPro" id="IPR004458">
    <property type="entry name" value="TIF2_bsu_arc"/>
</dbReference>
<dbReference type="InterPro" id="IPR002735">
    <property type="entry name" value="Transl_init_fac_IF2/IF5_dom"/>
</dbReference>
<dbReference type="InterPro" id="IPR016189">
    <property type="entry name" value="Transl_init_fac_IF2/IF5_N"/>
</dbReference>
<dbReference type="InterPro" id="IPR016190">
    <property type="entry name" value="Transl_init_fac_IF2/IF5_Zn-bd"/>
</dbReference>
<dbReference type="NCBIfam" id="TIGR00311">
    <property type="entry name" value="aIF-2beta"/>
    <property type="match status" value="1"/>
</dbReference>
<dbReference type="NCBIfam" id="NF003067">
    <property type="entry name" value="PRK03988.1"/>
    <property type="match status" value="1"/>
</dbReference>
<dbReference type="PANTHER" id="PTHR23001">
    <property type="entry name" value="EUKARYOTIC TRANSLATION INITIATION FACTOR"/>
    <property type="match status" value="1"/>
</dbReference>
<dbReference type="PANTHER" id="PTHR23001:SF3">
    <property type="entry name" value="EUKARYOTIC TRANSLATION INITIATION FACTOR 2 SUBUNIT 2"/>
    <property type="match status" value="1"/>
</dbReference>
<dbReference type="Pfam" id="PF01873">
    <property type="entry name" value="eIF-5_eIF-2B"/>
    <property type="match status" value="1"/>
</dbReference>
<dbReference type="SMART" id="SM00653">
    <property type="entry name" value="eIF2B_5"/>
    <property type="match status" value="1"/>
</dbReference>
<dbReference type="SUPFAM" id="SSF100966">
    <property type="entry name" value="Translation initiation factor 2 beta, aIF2beta, N-terminal domain"/>
    <property type="match status" value="1"/>
</dbReference>
<dbReference type="SUPFAM" id="SSF75689">
    <property type="entry name" value="Zinc-binding domain of translation initiation factor 2 beta"/>
    <property type="match status" value="1"/>
</dbReference>
<comment type="function">
    <text evidence="1">eIF-2 functions in the early steps of protein synthesis by forming a ternary complex with GTP and initiator tRNA.</text>
</comment>
<comment type="subunit">
    <text evidence="1">Heterotrimer composed of an alpha, a beta and a gamma chain.</text>
</comment>
<comment type="similarity">
    <text evidence="2">Belongs to the eIF-2-beta/eIF-5 family.</text>
</comment>
<sequence>MEIDYYDYEKLLEKAYEELPENVKHHKSRFEVPGALVTIEGNKTIIENFKDIAEALNRDPQHLLKFLLREIATAGTLEGKRVVLQGRFTPYLIANKIKKYIKEYVICPVCGSPDTKIIKRDRFYFLKCEACGAETPIQHL</sequence>